<dbReference type="EMBL" id="U18839">
    <property type="protein sequence ID" value="AAB64643.1"/>
    <property type="molecule type" value="Genomic_DNA"/>
</dbReference>
<dbReference type="EMBL" id="BK006939">
    <property type="protein sequence ID" value="DAA07749.1"/>
    <property type="molecule type" value="Genomic_DNA"/>
</dbReference>
<dbReference type="PIR" id="S50591">
    <property type="entry name" value="S50591"/>
</dbReference>
<dbReference type="RefSeq" id="NP_011012.3">
    <property type="nucleotide sequence ID" value="NM_001178979.3"/>
</dbReference>
<dbReference type="SMR" id="P40059"/>
<dbReference type="BioGRID" id="36833">
    <property type="interactions" value="122"/>
</dbReference>
<dbReference type="DIP" id="DIP-4823N"/>
<dbReference type="FunCoup" id="P40059">
    <property type="interactions" value="285"/>
</dbReference>
<dbReference type="IntAct" id="P40059">
    <property type="interactions" value="10"/>
</dbReference>
<dbReference type="MINT" id="P40059"/>
<dbReference type="STRING" id="4932.YER088C"/>
<dbReference type="GlyGen" id="P40059">
    <property type="glycosylation" value="1 site, 1 O-linked glycan (1 site)"/>
</dbReference>
<dbReference type="iPTMnet" id="P40059"/>
<dbReference type="PaxDb" id="4932-YER088C"/>
<dbReference type="PeptideAtlas" id="P40059"/>
<dbReference type="EnsemblFungi" id="YER088C_mRNA">
    <property type="protein sequence ID" value="YER088C"/>
    <property type="gene ID" value="YER088C"/>
</dbReference>
<dbReference type="GeneID" id="856822"/>
<dbReference type="KEGG" id="sce:YER088C"/>
<dbReference type="AGR" id="SGD:S000000890"/>
<dbReference type="SGD" id="S000000890">
    <property type="gene designation" value="DOT6"/>
</dbReference>
<dbReference type="VEuPathDB" id="FungiDB:YER088C"/>
<dbReference type="eggNOG" id="ENOG502RXV1">
    <property type="taxonomic scope" value="Eukaryota"/>
</dbReference>
<dbReference type="GeneTree" id="ENSGT00940000176456"/>
<dbReference type="HOGENOM" id="CLU_018984_0_0_1"/>
<dbReference type="InParanoid" id="P40059"/>
<dbReference type="OMA" id="RCTITSD"/>
<dbReference type="OrthoDB" id="2143914at2759"/>
<dbReference type="BioCyc" id="YEAST:G3O-30257-MONOMER"/>
<dbReference type="BioGRID-ORCS" id="856822">
    <property type="hits" value="1 hit in 13 CRISPR screens"/>
</dbReference>
<dbReference type="PRO" id="PR:P40059"/>
<dbReference type="Proteomes" id="UP000002311">
    <property type="component" value="Chromosome V"/>
</dbReference>
<dbReference type="RNAct" id="P40059">
    <property type="molecule type" value="protein"/>
</dbReference>
<dbReference type="GO" id="GO:0000781">
    <property type="term" value="C:chromosome, telomeric region"/>
    <property type="evidence" value="ECO:0007669"/>
    <property type="project" value="GOC"/>
</dbReference>
<dbReference type="GO" id="GO:0005737">
    <property type="term" value="C:cytoplasm"/>
    <property type="evidence" value="ECO:0007005"/>
    <property type="project" value="SGD"/>
</dbReference>
<dbReference type="GO" id="GO:0005634">
    <property type="term" value="C:nucleus"/>
    <property type="evidence" value="ECO:0007005"/>
    <property type="project" value="SGD"/>
</dbReference>
<dbReference type="GO" id="GO:0070210">
    <property type="term" value="C:Rpd3L-Expanded complex"/>
    <property type="evidence" value="ECO:0007005"/>
    <property type="project" value="SGD"/>
</dbReference>
<dbReference type="GO" id="GO:0043565">
    <property type="term" value="F:sequence-specific DNA binding"/>
    <property type="evidence" value="ECO:0000314"/>
    <property type="project" value="SGD"/>
</dbReference>
<dbReference type="GO" id="GO:0000183">
    <property type="term" value="P:rDNA heterochromatin formation"/>
    <property type="evidence" value="ECO:0000315"/>
    <property type="project" value="SGD"/>
</dbReference>
<dbReference type="GO" id="GO:0006357">
    <property type="term" value="P:regulation of transcription by RNA polymerase II"/>
    <property type="evidence" value="ECO:0000315"/>
    <property type="project" value="SGD"/>
</dbReference>
<dbReference type="GO" id="GO:0031509">
    <property type="term" value="P:subtelomeric heterochromatin formation"/>
    <property type="evidence" value="ECO:0000315"/>
    <property type="project" value="SGD"/>
</dbReference>
<dbReference type="CDD" id="cd00167">
    <property type="entry name" value="SANT"/>
    <property type="match status" value="1"/>
</dbReference>
<dbReference type="Gene3D" id="1.10.10.60">
    <property type="entry name" value="Homeodomain-like"/>
    <property type="match status" value="1"/>
</dbReference>
<dbReference type="InterPro" id="IPR009057">
    <property type="entry name" value="Homeodomain-like_sf"/>
</dbReference>
<dbReference type="InterPro" id="IPR017930">
    <property type="entry name" value="Myb_dom"/>
</dbReference>
<dbReference type="InterPro" id="IPR001005">
    <property type="entry name" value="SANT/Myb"/>
</dbReference>
<dbReference type="Pfam" id="PF13921">
    <property type="entry name" value="Myb_DNA-bind_6"/>
    <property type="match status" value="1"/>
</dbReference>
<dbReference type="SMART" id="SM00717">
    <property type="entry name" value="SANT"/>
    <property type="match status" value="1"/>
</dbReference>
<dbReference type="SUPFAM" id="SSF46689">
    <property type="entry name" value="Homeodomain-like"/>
    <property type="match status" value="1"/>
</dbReference>
<dbReference type="PROSITE" id="PS51294">
    <property type="entry name" value="HTH_MYB"/>
    <property type="match status" value="1"/>
</dbReference>
<name>DOT6_YEAST</name>
<sequence length="670" mass="73048">MSISTSLNSASIHLSSMDTHPQLHSLTRQPHSSSTAMSKNEAQESSPSLPASSSSSTSASASASSKNSSKNPSSWDPQDDLLLRHLKEVKKMGWKDISQYFPNRTPNACQFRWRRLKSGNLKSNKTALIDINTYTGPLKITHGDETANAQQKPSKKVEENVLTEDTAEFTTTSSIPIPSRKTSLPSFHASMSFSQSPSNVTPTTIVSNAASSMPFAPPTLPAALPHHPHQHLHHHPHHKTLKPRSNSHSFTNSLNQDPIVRSNDEEKYGFIPKVFVRSRRSSFAYPQQVAITTTPSSPNSSHVLLSSKSRRGSLANWSRRSSFNVSSNNTSRRSSMILAPNSVSNIFNVNNSGSNTASTSNTNSRRESVIKKEFQQRLNNLSNSGGPTSNNGPIFPNSYTFMDLPHSSSVSSSSTLHKSKRGSFSGHSMKSSCNPTNLWSKDEDALLMENKKRNLSVMELSILLPQRTEVEIQWRLNALSSDADMLSPTHSPQKTLSKKTCPRMFKSGSTTDDDKGSDKEDVMGDGSNDDDEDNVDPLHRAKQSSNKTVFSSSSSNISSKDVSPDPIFSPDPADDSSNTSDAGSRCTITSDTSSSAATMNRTPNSKNPQDIALLNNFRSEAITPRPKPSSTTTSITTETTNNMINHSSSTTTTTNNSPLPSINTIFKDML</sequence>
<accession>P40059</accession>
<accession>D3DLZ5</accession>
<gene>
    <name type="primary">DOT6</name>
    <name type="synonym">PBF2</name>
    <name type="ordered locus">YER088C</name>
</gene>
<comment type="function">
    <text evidence="5 6">Component of the RPD3 histone deacetylase complex RPD3C(L) responsible for the deacetylation of lysine residues on the N-terminal part of the core histones (H2A, H2B, H3 and H4). Histone deacetylation gives a tag for epigenetic repression and plays an important role in transcriptional regulation, cell cycle progression and developmental events. DOT6 binds to sequences containing the core CGATG, which resembles the PAC (Polymerase A and C) motif.</text>
</comment>
<comment type="subunit">
    <text evidence="4">Component of the RPD3C(L) complex composed of at least ASH1, CTI6, DEP1, DOT6, PHO23, RPD3, RXT2, RXT3, SAP30, SDS3, SIN3, TOD6; UME1 and UME6.</text>
</comment>
<comment type="subcellular location">
    <subcellularLocation>
        <location evidence="7">Nucleus</location>
    </subcellularLocation>
</comment>
<comment type="miscellaneous">
    <text evidence="3">Present with 2120 molecules/cell in log phase SD medium.</text>
</comment>
<comment type="similarity">
    <text evidence="7">Belongs to the DOT6 family.</text>
</comment>
<proteinExistence type="evidence at protein level"/>
<reference key="1">
    <citation type="journal article" date="1998" name="Genetics">
        <title>Identification of high-copy disruptors of telomeric silencing in Saccharomyces cerevisiae.</title>
        <authorList>
            <person name="Singer M.S."/>
            <person name="Kahana A."/>
            <person name="Wolf A.J."/>
            <person name="Meisinger L.L."/>
            <person name="Peterson S.E."/>
            <person name="Goggin C."/>
            <person name="Mahowald M."/>
            <person name="Gottschling D.E."/>
        </authorList>
    </citation>
    <scope>NUCLEOTIDE SEQUENCE [GENOMIC DNA]</scope>
    <scope>FUNCTION</scope>
</reference>
<reference key="2">
    <citation type="journal article" date="1997" name="Nature">
        <title>The nucleotide sequence of Saccharomyces cerevisiae chromosome V.</title>
        <authorList>
            <person name="Dietrich F.S."/>
            <person name="Mulligan J.T."/>
            <person name="Hennessy K.M."/>
            <person name="Yelton M.A."/>
            <person name="Allen E."/>
            <person name="Araujo R."/>
            <person name="Aviles E."/>
            <person name="Berno A."/>
            <person name="Brennan T."/>
            <person name="Carpenter J."/>
            <person name="Chen E."/>
            <person name="Cherry J.M."/>
            <person name="Chung E."/>
            <person name="Duncan M."/>
            <person name="Guzman E."/>
            <person name="Hartzell G."/>
            <person name="Hunicke-Smith S."/>
            <person name="Hyman R.W."/>
            <person name="Kayser A."/>
            <person name="Komp C."/>
            <person name="Lashkari D."/>
            <person name="Lew H."/>
            <person name="Lin D."/>
            <person name="Mosedale D."/>
            <person name="Nakahara K."/>
            <person name="Namath A."/>
            <person name="Norgren R."/>
            <person name="Oefner P."/>
            <person name="Oh C."/>
            <person name="Petel F.X."/>
            <person name="Roberts D."/>
            <person name="Sehl P."/>
            <person name="Schramm S."/>
            <person name="Shogren T."/>
            <person name="Smith V."/>
            <person name="Taylor P."/>
            <person name="Wei Y."/>
            <person name="Botstein D."/>
            <person name="Davis R.W."/>
        </authorList>
    </citation>
    <scope>NUCLEOTIDE SEQUENCE [LARGE SCALE GENOMIC DNA]</scope>
    <source>
        <strain>ATCC 204508 / S288c</strain>
    </source>
</reference>
<reference key="3">
    <citation type="journal article" date="2014" name="G3 (Bethesda)">
        <title>The reference genome sequence of Saccharomyces cerevisiae: Then and now.</title>
        <authorList>
            <person name="Engel S.R."/>
            <person name="Dietrich F.S."/>
            <person name="Fisk D.G."/>
            <person name="Binkley G."/>
            <person name="Balakrishnan R."/>
            <person name="Costanzo M.C."/>
            <person name="Dwight S.S."/>
            <person name="Hitz B.C."/>
            <person name="Karra K."/>
            <person name="Nash R.S."/>
            <person name="Weng S."/>
            <person name="Wong E.D."/>
            <person name="Lloyd P."/>
            <person name="Skrzypek M.S."/>
            <person name="Miyasato S.R."/>
            <person name="Simison M."/>
            <person name="Cherry J.M."/>
        </authorList>
    </citation>
    <scope>GENOME REANNOTATION</scope>
    <source>
        <strain>ATCC 204508 / S288c</strain>
    </source>
</reference>
<reference key="4">
    <citation type="journal article" date="2003" name="Nature">
        <title>Global analysis of protein expression in yeast.</title>
        <authorList>
            <person name="Ghaemmaghami S."/>
            <person name="Huh W.-K."/>
            <person name="Bower K."/>
            <person name="Howson R.W."/>
            <person name="Belle A."/>
            <person name="Dephoure N."/>
            <person name="O'Shea E.K."/>
            <person name="Weissman J.S."/>
        </authorList>
    </citation>
    <scope>LEVEL OF PROTEIN EXPRESSION [LARGE SCALE ANALYSIS]</scope>
</reference>
<reference key="5">
    <citation type="journal article" date="2007" name="J. Proteome Res.">
        <title>Large-scale phosphorylation analysis of alpha-factor-arrested Saccharomyces cerevisiae.</title>
        <authorList>
            <person name="Li X."/>
            <person name="Gerber S.A."/>
            <person name="Rudner A.D."/>
            <person name="Beausoleil S.A."/>
            <person name="Haas W."/>
            <person name="Villen J."/>
            <person name="Elias J.E."/>
            <person name="Gygi S.P."/>
        </authorList>
    </citation>
    <scope>PHOSPHORYLATION [LARGE SCALE ANALYSIS] AT SER-491</scope>
    <scope>IDENTIFICATION BY MASS SPECTROMETRY [LARGE SCALE ANALYSIS]</scope>
    <source>
        <strain>ADR376</strain>
    </source>
</reference>
<reference key="6">
    <citation type="journal article" date="2008" name="Genome Biol.">
        <title>Chromatin Central: towards the comparative proteome by accurate mapping of the yeast proteomic environment.</title>
        <authorList>
            <person name="Shevchenko A."/>
            <person name="Roguev A."/>
            <person name="Schaft D."/>
            <person name="Buchanan L."/>
            <person name="Habermann B."/>
            <person name="Sakalar C."/>
            <person name="Thomas H."/>
            <person name="Krogan N.J."/>
            <person name="Shevchenko A."/>
            <person name="Stewart A.F."/>
        </authorList>
    </citation>
    <scope>IDENTIFICATION IN THE RPD3(L) COMPLEX</scope>
    <scope>IDENTIFICATION BY MASS SPECTROMETRY</scope>
</reference>
<reference key="7">
    <citation type="journal article" date="2008" name="Mol. Cell">
        <title>A library of yeast transcription factor motifs reveals a widespread function for Rsc3 in targeting nucleosome exclusion at promoters.</title>
        <authorList>
            <person name="Badis G."/>
            <person name="Chan E.T."/>
            <person name="van Bakel H."/>
            <person name="Pena-Castillo L."/>
            <person name="Tillo D."/>
            <person name="Tsui K."/>
            <person name="Carlson C.D."/>
            <person name="Gossett A.J."/>
            <person name="Hasinoff M.J."/>
            <person name="Warren C.L."/>
            <person name="Gebbia M."/>
            <person name="Talukder S."/>
            <person name="Yang A."/>
            <person name="Mnaimneh S."/>
            <person name="Terterov D."/>
            <person name="Coburn D."/>
            <person name="Li Yeo A."/>
            <person name="Yeo Z.X."/>
            <person name="Clarke N.D."/>
            <person name="Lieb J.D."/>
            <person name="Ansari A.Z."/>
            <person name="Nislow C."/>
            <person name="Hughes T.R."/>
        </authorList>
    </citation>
    <scope>DNA-BINDING</scope>
</reference>
<reference key="8">
    <citation type="journal article" date="2008" name="Mol. Cell. Proteomics">
        <title>A multidimensional chromatography technology for in-depth phosphoproteome analysis.</title>
        <authorList>
            <person name="Albuquerque C.P."/>
            <person name="Smolka M.B."/>
            <person name="Payne S.H."/>
            <person name="Bafna V."/>
            <person name="Eng J."/>
            <person name="Zhou H."/>
        </authorList>
    </citation>
    <scope>IDENTIFICATION BY MASS SPECTROMETRY [LARGE SCALE ANALYSIS]</scope>
</reference>
<reference key="9">
    <citation type="journal article" date="2009" name="Genome Res.">
        <title>High-resolution DNA-binding specificity analysis of yeast transcription factors.</title>
        <authorList>
            <person name="Zhu C."/>
            <person name="Byers K.J."/>
            <person name="McCord R.P."/>
            <person name="Shi Z."/>
            <person name="Berger M.F."/>
            <person name="Newburger D.E."/>
            <person name="Saulrieta K."/>
            <person name="Smith Z."/>
            <person name="Shah M.V."/>
            <person name="Radhakrishnan M."/>
            <person name="Philippakis A.A."/>
            <person name="Hu Y."/>
            <person name="De Masi F."/>
            <person name="Pacek M."/>
            <person name="Rolfs A."/>
            <person name="Murthy T.V.S."/>
            <person name="Labaer J."/>
            <person name="Bulyk M.L."/>
        </authorList>
    </citation>
    <scope>FUNCTION</scope>
</reference>
<reference key="10">
    <citation type="journal article" date="2009" name="Science">
        <title>Global analysis of Cdk1 substrate phosphorylation sites provides insights into evolution.</title>
        <authorList>
            <person name="Holt L.J."/>
            <person name="Tuch B.B."/>
            <person name="Villen J."/>
            <person name="Johnson A.D."/>
            <person name="Gygi S.P."/>
            <person name="Morgan D.O."/>
        </authorList>
    </citation>
    <scope>PHOSPHORYLATION [LARGE SCALE ANALYSIS] AT SER-245; SER-247; SER-487; THR-489 AND SER-491</scope>
    <scope>IDENTIFICATION BY MASS SPECTROMETRY [LARGE SCALE ANALYSIS]</scope>
</reference>
<organism>
    <name type="scientific">Saccharomyces cerevisiae (strain ATCC 204508 / S288c)</name>
    <name type="common">Baker's yeast</name>
    <dbReference type="NCBI Taxonomy" id="559292"/>
    <lineage>
        <taxon>Eukaryota</taxon>
        <taxon>Fungi</taxon>
        <taxon>Dikarya</taxon>
        <taxon>Ascomycota</taxon>
        <taxon>Saccharomycotina</taxon>
        <taxon>Saccharomycetes</taxon>
        <taxon>Saccharomycetales</taxon>
        <taxon>Saccharomycetaceae</taxon>
        <taxon>Saccharomyces</taxon>
    </lineage>
</organism>
<evidence type="ECO:0000255" key="1">
    <source>
        <dbReference type="PROSITE-ProRule" id="PRU00625"/>
    </source>
</evidence>
<evidence type="ECO:0000256" key="2">
    <source>
        <dbReference type="SAM" id="MobiDB-lite"/>
    </source>
</evidence>
<evidence type="ECO:0000269" key="3">
    <source>
    </source>
</evidence>
<evidence type="ECO:0000269" key="4">
    <source>
    </source>
</evidence>
<evidence type="ECO:0000269" key="5">
    <source>
    </source>
</evidence>
<evidence type="ECO:0000269" key="6">
    <source>
    </source>
</evidence>
<evidence type="ECO:0000305" key="7"/>
<evidence type="ECO:0007744" key="8">
    <source>
    </source>
</evidence>
<evidence type="ECO:0007744" key="9">
    <source>
    </source>
</evidence>
<feature type="chain" id="PRO_0000197108" description="Transcriptional regulatory protein DOT6">
    <location>
        <begin position="1"/>
        <end position="670"/>
    </location>
</feature>
<feature type="domain" description="HTH myb-type" evidence="1">
    <location>
        <begin position="67"/>
        <end position="121"/>
    </location>
</feature>
<feature type="DNA-binding region" description="H-T-H motif" evidence="1">
    <location>
        <begin position="94"/>
        <end position="117"/>
    </location>
</feature>
<feature type="region of interest" description="Disordered" evidence="2">
    <location>
        <begin position="1"/>
        <end position="78"/>
    </location>
</feature>
<feature type="region of interest" description="Disordered" evidence="2">
    <location>
        <begin position="226"/>
        <end position="250"/>
    </location>
</feature>
<feature type="region of interest" description="Disordered" evidence="2">
    <location>
        <begin position="293"/>
        <end position="332"/>
    </location>
</feature>
<feature type="region of interest" description="Disordered" evidence="2">
    <location>
        <begin position="406"/>
        <end position="436"/>
    </location>
</feature>
<feature type="region of interest" description="Disordered" evidence="2">
    <location>
        <begin position="483"/>
        <end position="659"/>
    </location>
</feature>
<feature type="compositionally biased region" description="Polar residues" evidence="2">
    <location>
        <begin position="1"/>
        <end position="44"/>
    </location>
</feature>
<feature type="compositionally biased region" description="Low complexity" evidence="2">
    <location>
        <begin position="45"/>
        <end position="74"/>
    </location>
</feature>
<feature type="compositionally biased region" description="Basic residues" evidence="2">
    <location>
        <begin position="226"/>
        <end position="242"/>
    </location>
</feature>
<feature type="compositionally biased region" description="Low complexity" evidence="2">
    <location>
        <begin position="295"/>
        <end position="307"/>
    </location>
</feature>
<feature type="compositionally biased region" description="Low complexity" evidence="2">
    <location>
        <begin position="316"/>
        <end position="332"/>
    </location>
</feature>
<feature type="compositionally biased region" description="Polar residues" evidence="2">
    <location>
        <begin position="425"/>
        <end position="436"/>
    </location>
</feature>
<feature type="compositionally biased region" description="Basic and acidic residues" evidence="2">
    <location>
        <begin position="512"/>
        <end position="522"/>
    </location>
</feature>
<feature type="compositionally biased region" description="Low complexity" evidence="2">
    <location>
        <begin position="544"/>
        <end position="561"/>
    </location>
</feature>
<feature type="compositionally biased region" description="Low complexity" evidence="2">
    <location>
        <begin position="587"/>
        <end position="598"/>
    </location>
</feature>
<feature type="compositionally biased region" description="Polar residues" evidence="2">
    <location>
        <begin position="599"/>
        <end position="608"/>
    </location>
</feature>
<feature type="compositionally biased region" description="Low complexity" evidence="2">
    <location>
        <begin position="622"/>
        <end position="659"/>
    </location>
</feature>
<feature type="modified residue" description="Phosphoserine" evidence="9">
    <location>
        <position position="245"/>
    </location>
</feature>
<feature type="modified residue" description="Phosphoserine" evidence="9">
    <location>
        <position position="247"/>
    </location>
</feature>
<feature type="modified residue" description="Phosphoserine" evidence="9">
    <location>
        <position position="487"/>
    </location>
</feature>
<feature type="modified residue" description="Phosphothreonine" evidence="9">
    <location>
        <position position="489"/>
    </location>
</feature>
<feature type="modified residue" description="Phosphoserine" evidence="8 9">
    <location>
        <position position="491"/>
    </location>
</feature>
<keyword id="KW-0238">DNA-binding</keyword>
<keyword id="KW-0539">Nucleus</keyword>
<keyword id="KW-0597">Phosphoprotein</keyword>
<keyword id="KW-1185">Reference proteome</keyword>
<keyword id="KW-0804">Transcription</keyword>
<keyword id="KW-0805">Transcription regulation</keyword>
<protein>
    <recommendedName>
        <fullName>Transcriptional regulatory protein DOT6</fullName>
    </recommendedName>
    <alternativeName>
        <fullName>Disrupter of telomere silencing protein 6</fullName>
    </alternativeName>
    <alternativeName>
        <fullName>PAC-binding factor 2</fullName>
    </alternativeName>
</protein>